<proteinExistence type="evidence at protein level"/>
<keyword id="KW-0027">Amidation</keyword>
<keyword id="KW-0903">Direct protein sequencing</keyword>
<keyword id="KW-0527">Neuropeptide</keyword>
<keyword id="KW-0558">Oxidation</keyword>
<keyword id="KW-0873">Pyrrolidone carboxylic acid</keyword>
<keyword id="KW-1185">Reference proteome</keyword>
<keyword id="KW-0964">Secreted</keyword>
<name>SK1_RHOPR</name>
<reference evidence="5" key="1">
    <citation type="journal article" date="2009" name="Proteomics">
        <title>The neuropeptidome of Rhodnius prolixus brain.</title>
        <authorList>
            <person name="Ons S."/>
            <person name="Richter F."/>
            <person name="Urlaub H."/>
            <person name="Pomar R.R."/>
        </authorList>
    </citation>
    <scope>PROTEIN SEQUENCE</scope>
    <scope>MASS SPECTROMETRY</scope>
    <scope>PYROGLUTAMATE FORMATION AT GLN-1</scope>
    <scope>OXIDATION AT MET-8</scope>
    <scope>AMIDATION AT PHE-10</scope>
    <source>
        <tissue evidence="3">Brain</tissue>
    </source>
</reference>
<sequence>QFNEYGHMRF</sequence>
<accession>P85810</accession>
<protein>
    <recommendedName>
        <fullName evidence="4">Sulfakinin-1</fullName>
        <shortName evidence="4">Rhopr-SK-1</shortName>
    </recommendedName>
</protein>
<dbReference type="STRING" id="13249.P85810"/>
<dbReference type="InParanoid" id="P85810"/>
<dbReference type="Proteomes" id="UP000015103">
    <property type="component" value="Unassembled WGS sequence"/>
</dbReference>
<dbReference type="GO" id="GO:0005576">
    <property type="term" value="C:extracellular region"/>
    <property type="evidence" value="ECO:0007669"/>
    <property type="project" value="UniProtKB-SubCell"/>
</dbReference>
<dbReference type="GO" id="GO:0007218">
    <property type="term" value="P:neuropeptide signaling pathway"/>
    <property type="evidence" value="ECO:0007669"/>
    <property type="project" value="UniProtKB-KW"/>
</dbReference>
<dbReference type="InterPro" id="IPR013152">
    <property type="entry name" value="Gastrin/cholecystokinin_CS"/>
</dbReference>
<dbReference type="InterPro" id="IPR013259">
    <property type="entry name" value="Sulfakinin"/>
</dbReference>
<dbReference type="Pfam" id="PF08257">
    <property type="entry name" value="Sulfakinin"/>
    <property type="match status" value="1"/>
</dbReference>
<dbReference type="PROSITE" id="PS00259">
    <property type="entry name" value="GASTRIN"/>
    <property type="match status" value="1"/>
</dbReference>
<organism>
    <name type="scientific">Rhodnius prolixus</name>
    <name type="common">Triatomid bug</name>
    <dbReference type="NCBI Taxonomy" id="13249"/>
    <lineage>
        <taxon>Eukaryota</taxon>
        <taxon>Metazoa</taxon>
        <taxon>Ecdysozoa</taxon>
        <taxon>Arthropoda</taxon>
        <taxon>Hexapoda</taxon>
        <taxon>Insecta</taxon>
        <taxon>Pterygota</taxon>
        <taxon>Neoptera</taxon>
        <taxon>Paraneoptera</taxon>
        <taxon>Hemiptera</taxon>
        <taxon>Heteroptera</taxon>
        <taxon>Panheteroptera</taxon>
        <taxon>Cimicomorpha</taxon>
        <taxon>Reduviidae</taxon>
        <taxon>Triatominae</taxon>
        <taxon>Rhodnius</taxon>
    </lineage>
</organism>
<feature type="peptide" id="PRO_0000365778" description="Sulfakinin-1" evidence="3">
    <location>
        <begin position="1"/>
        <end position="10"/>
    </location>
</feature>
<feature type="modified residue" description="Pyrrolidone carboxylic acid" evidence="3">
    <location>
        <position position="1"/>
    </location>
</feature>
<feature type="modified residue" description="Methionine sulfoxide" evidence="3">
    <location>
        <position position="8"/>
    </location>
</feature>
<feature type="modified residue" description="Phenylalanine amide" evidence="3">
    <location>
        <position position="10"/>
    </location>
</feature>
<comment type="function">
    <text evidence="1">Myotropic peptide.</text>
</comment>
<comment type="subcellular location">
    <subcellularLocation>
        <location evidence="5">Secreted</location>
    </subcellularLocation>
</comment>
<comment type="PTM">
    <text evidence="3">Occurs in two forms, Rhopr-SK-1 contains unmodified Met-8 and Ox-Rhopr-SK-1 has oxidation at Met-8.</text>
</comment>
<comment type="PTM">
    <text evidence="3">Does not contain sulfotyrosine.</text>
</comment>
<comment type="mass spectrometry"/>
<comment type="mass spectrometry">
    <text>With oxidation at Met-8.</text>
</comment>
<comment type="similarity">
    <text evidence="2">Belongs to the gastrin/cholecystokinin family.</text>
</comment>
<evidence type="ECO:0000250" key="1">
    <source>
        <dbReference type="UniProtKB" id="P41493"/>
    </source>
</evidence>
<evidence type="ECO:0000255" key="2"/>
<evidence type="ECO:0000269" key="3">
    <source>
    </source>
</evidence>
<evidence type="ECO:0000303" key="4">
    <source>
    </source>
</evidence>
<evidence type="ECO:0000305" key="5"/>